<reference key="1">
    <citation type="journal article" date="2003" name="Proc. Natl. Acad. Sci. U.S.A.">
        <title>Molecular pathogenesis of inherited hypertension with hyperkalemia: The Na-Cl cotransporter is inhibited by wild-type but not mutant WNK4.</title>
        <authorList>
            <person name="Wilson F.H."/>
            <person name="Kahle K.T."/>
            <person name="Sabath E."/>
            <person name="Lalioti M.D."/>
            <person name="Rapson A.K."/>
            <person name="Hoover R.S."/>
            <person name="Hebert S.C."/>
            <person name="Gamba G."/>
            <person name="Lifton R.P."/>
        </authorList>
    </citation>
    <scope>NUCLEOTIDE SEQUENCE [MRNA]</scope>
    <scope>FUNCTION</scope>
    <source>
        <strain>C57BL/6J</strain>
        <tissue>Kidney</tissue>
    </source>
</reference>
<reference key="2">
    <citation type="journal article" date="2003" name="J. Clin. Invest.">
        <title>WNK kinases regulate thiazide-sensitive Na-Cl cotransport.</title>
        <authorList>
            <person name="Yang C.-L."/>
            <person name="Angell J."/>
            <person name="Mitchell R."/>
            <person name="Ellison D.H."/>
        </authorList>
    </citation>
    <scope>NUCLEOTIDE SEQUENCE [MRNA]</scope>
    <scope>FUNCTION</scope>
    <scope>MUTAGENESIS OF GLU-559; ASP-561 AND GLN-562</scope>
    <source>
        <strain>BALB/cJ</strain>
    </source>
</reference>
<reference key="3">
    <citation type="journal article" date="2009" name="PLoS Biol.">
        <title>Lineage-specific biology revealed by a finished genome assembly of the mouse.</title>
        <authorList>
            <person name="Church D.M."/>
            <person name="Goodstadt L."/>
            <person name="Hillier L.W."/>
            <person name="Zody M.C."/>
            <person name="Goldstein S."/>
            <person name="She X."/>
            <person name="Bult C.J."/>
            <person name="Agarwala R."/>
            <person name="Cherry J.L."/>
            <person name="DiCuccio M."/>
            <person name="Hlavina W."/>
            <person name="Kapustin Y."/>
            <person name="Meric P."/>
            <person name="Maglott D."/>
            <person name="Birtle Z."/>
            <person name="Marques A.C."/>
            <person name="Graves T."/>
            <person name="Zhou S."/>
            <person name="Teague B."/>
            <person name="Potamousis K."/>
            <person name="Churas C."/>
            <person name="Place M."/>
            <person name="Herschleb J."/>
            <person name="Runnheim R."/>
            <person name="Forrest D."/>
            <person name="Amos-Landgraf J."/>
            <person name="Schwartz D.C."/>
            <person name="Cheng Z."/>
            <person name="Lindblad-Toh K."/>
            <person name="Eichler E.E."/>
            <person name="Ponting C.P."/>
        </authorList>
    </citation>
    <scope>NUCLEOTIDE SEQUENCE [LARGE SCALE GENOMIC DNA]</scope>
    <source>
        <strain>C57BL/6J</strain>
    </source>
</reference>
<reference key="4">
    <citation type="journal article" date="2004" name="Genome Res.">
        <title>The status, quality, and expansion of the NIH full-length cDNA project: the Mammalian Gene Collection (MGC).</title>
        <authorList>
            <consortium name="The MGC Project Team"/>
        </authorList>
    </citation>
    <scope>NUCLEOTIDE SEQUENCE [LARGE SCALE MRNA]</scope>
    <source>
        <strain>FVB/N</strain>
        <tissue>Kidney</tissue>
        <tissue>Mammary carcinoma</tissue>
    </source>
</reference>
<reference key="5">
    <citation type="journal article" date="2001" name="Science">
        <title>Human hypertension caused by mutations in WNK kinases.</title>
        <authorList>
            <person name="Wilson F.H."/>
            <person name="Disse-Nicodeme S."/>
            <person name="Choate K.A."/>
            <person name="Ishikawa K."/>
            <person name="Nelson-Williams C."/>
            <person name="Desitter I."/>
            <person name="Gunel M."/>
            <person name="Milford D.V."/>
            <person name="Lipkin G.W."/>
            <person name="Achard J.-M."/>
            <person name="Feely M.P."/>
            <person name="Dussol B."/>
            <person name="Berland Y."/>
            <person name="Unwin R.J."/>
            <person name="Mayan H."/>
            <person name="Simon D.B."/>
            <person name="Farfel Z."/>
            <person name="Jeunemaitre X."/>
            <person name="Lifton R.P."/>
        </authorList>
    </citation>
    <scope>SUBCELLULAR LOCATION</scope>
    <scope>TISSUE SPECIFICITY</scope>
</reference>
<reference key="6">
    <citation type="journal article" date="2003" name="Nat. Genet.">
        <title>WNK4 regulates the balance between renal NaCl reabsorption and K+ secretion.</title>
        <authorList>
            <person name="Kahle K.T."/>
            <person name="Wilson F.H."/>
            <person name="Leng Q."/>
            <person name="Lalioti M.D."/>
            <person name="O'Connell A.D."/>
            <person name="Dong K."/>
            <person name="Rapson A.K."/>
            <person name="MacGregor G.G."/>
            <person name="Giebisch G."/>
            <person name="Hebert S.C."/>
            <person name="Lifton R.P."/>
        </authorList>
    </citation>
    <scope>FUNCTION</scope>
    <scope>INTERACTION WITH KCNJ1</scope>
    <scope>MUTAGENESIS OF ASP-318</scope>
</reference>
<reference key="7">
    <citation type="journal article" date="2006" name="Nat. Genet.">
        <title>Wnk4 controls blood pressure and potassium homeostasis via regulation of mass and activity of the distal convoluted tubule.</title>
        <authorList>
            <person name="Lalioti M.D."/>
            <person name="Zhang J."/>
            <person name="Volkman H.M."/>
            <person name="Kahle K.T."/>
            <person name="Hoffmann K.E."/>
            <person name="Toka H.R."/>
            <person name="Nelson-Williams C."/>
            <person name="Ellison D.H."/>
            <person name="Flavell R."/>
            <person name="Booth C.J."/>
            <person name="Lu Y."/>
            <person name="Geller D.S."/>
            <person name="Lifton R.P."/>
        </authorList>
    </citation>
    <scope>FUNCTION</scope>
    <scope>MUTAGENESIS OF GLN-562</scope>
</reference>
<reference key="8">
    <citation type="journal article" date="2006" name="Am. J. Physiol.">
        <title>WNK kinases influence TRPV4 channel function and localization.</title>
        <authorList>
            <person name="Fu Y."/>
            <person name="Subramanya A."/>
            <person name="Rozansky D."/>
            <person name="Cohen D.M."/>
        </authorList>
    </citation>
    <scope>FUNCTION</scope>
    <scope>MUTAGENESIS OF LYS-183</scope>
</reference>
<reference key="9">
    <citation type="journal article" date="2007" name="Cell Metab.">
        <title>Molecular pathogenesis of pseudohypoaldosteronism type II: generation and analysis of a Wnk4(D561A/+) knockin mouse model.</title>
        <authorList>
            <person name="Yang S.S."/>
            <person name="Morimoto T."/>
            <person name="Rai T."/>
            <person name="Chiga M."/>
            <person name="Sohara E."/>
            <person name="Ohno M."/>
            <person name="Uchida K."/>
            <person name="Lin S.H."/>
            <person name="Moriguchi T."/>
            <person name="Shibuya H."/>
            <person name="Kondo Y."/>
            <person name="Sasaki S."/>
            <person name="Uchida S."/>
        </authorList>
    </citation>
    <scope>FUNCTION</scope>
    <scope>MUTAGENESIS OF ASP-561</scope>
</reference>
<reference key="10">
    <citation type="journal article" date="2007" name="J. Clin. Invest.">
        <title>The thiazide-sensitive Na-Cl cotransporter is regulated by a WNK kinase signaling complex.</title>
        <authorList>
            <person name="Yang C.L."/>
            <person name="Zhu X."/>
            <person name="Ellison D.H."/>
        </authorList>
    </citation>
    <scope>FUNCTION</scope>
    <scope>INTERACTION WITH WNK1 AND WNK3</scope>
    <scope>PHOSPHORYLATION BY WNK1 AND WNK3</scope>
</reference>
<reference key="11">
    <citation type="journal article" date="2007" name="J. Physiol. (Lond.)">
        <title>SLC26A9 is a Cl(-) channel regulated by the WNK kinases.</title>
        <authorList>
            <person name="Dorwart M.R."/>
            <person name="Shcheynikov N."/>
            <person name="Wang Y."/>
            <person name="Stippec S."/>
            <person name="Muallem S."/>
        </authorList>
    </citation>
    <scope>FUNCTION</scope>
    <scope>MUTAGENESIS OF LYS-183</scope>
</reference>
<reference key="12">
    <citation type="journal article" date="2007" name="Proc. Natl. Acad. Sci. U.S.A.">
        <title>WNK4 regulates activity of the epithelial Na+ channel in vitro and in vivo.</title>
        <authorList>
            <person name="Ring A.M."/>
            <person name="Cheng S.X."/>
            <person name="Leng Q."/>
            <person name="Kahle K.T."/>
            <person name="Rinehart J."/>
            <person name="Lalioti M.D."/>
            <person name="Volkman H.M."/>
            <person name="Wilson F.H."/>
            <person name="Hebert S.C."/>
            <person name="Lifton R.P."/>
        </authorList>
    </citation>
    <scope>FUNCTION</scope>
    <scope>ACTIVE SITE</scope>
    <scope>MUTAGENESIS OF ASP-318 AND GLN-562</scope>
</reference>
<reference key="13">
    <citation type="journal article" date="2009" name="Hum. Mol. Genet.">
        <title>Targeted disruption of the Wnk4 gene decreases phosphorylation of Na-Cl cotransporter, increases Na excretion and lowers blood pressure.</title>
        <authorList>
            <person name="Ohta A."/>
            <person name="Rai T."/>
            <person name="Yui N."/>
            <person name="Chiga M."/>
            <person name="Yang S.S."/>
            <person name="Lin S.H."/>
            <person name="Sohara E."/>
            <person name="Sasaki S."/>
            <person name="Uchida S."/>
        </authorList>
    </citation>
    <scope>FUNCTION</scope>
    <scope>DISRUPTION PHENOTYPE</scope>
</reference>
<reference key="14">
    <citation type="journal article" date="2009" name="Proc. Natl. Acad. Sci. U.S.A.">
        <title>Angiotensin II signaling increases activity of the renal Na-Cl cotransporter through a WNK4-SPAK-dependent pathway.</title>
        <authorList>
            <person name="San-Cristobal P."/>
            <person name="Pacheco-Alvarez D."/>
            <person name="Richardson C."/>
            <person name="Ring A.M."/>
            <person name="Vazquez N."/>
            <person name="Rafiqi F.H."/>
            <person name="Chari D."/>
            <person name="Kahle K.T."/>
            <person name="Leng Q."/>
            <person name="Bobadilla N.A."/>
            <person name="Hebert S.C."/>
            <person name="Alessi D.R."/>
            <person name="Lifton R.P."/>
            <person name="Gamba G."/>
        </authorList>
    </citation>
    <scope>FUNCTION</scope>
</reference>
<reference key="15">
    <citation type="journal article" date="2010" name="Cell">
        <title>A tissue-specific atlas of mouse protein phosphorylation and expression.</title>
        <authorList>
            <person name="Huttlin E.L."/>
            <person name="Jedrychowski M.P."/>
            <person name="Elias J.E."/>
            <person name="Goswami T."/>
            <person name="Rad R."/>
            <person name="Beausoleil S.A."/>
            <person name="Villen J."/>
            <person name="Haas W."/>
            <person name="Sowa M.E."/>
            <person name="Gygi S.P."/>
        </authorList>
    </citation>
    <scope>PHOSPHORYLATION [LARGE SCALE ANALYSIS] AT SER-1196</scope>
    <scope>IDENTIFICATION BY MASS SPECTROMETRY [LARGE SCALE ANALYSIS]</scope>
    <source>
        <tissue>Testis</tissue>
    </source>
</reference>
<reference key="16">
    <citation type="journal article" date="2011" name="J. Cell Sci.">
        <title>Phenotypes of pseudohypoaldosteronism type II caused by the WNK4 D561A missense mutation are dependent on the WNK-OSR1/SPAK kinase cascade.</title>
        <authorList>
            <person name="Chiga M."/>
            <person name="Rafiqi F.H."/>
            <person name="Alessi D.R."/>
            <person name="Sohara E."/>
            <person name="Ohta A."/>
            <person name="Rai T."/>
            <person name="Sasaki S."/>
            <person name="Uchida S."/>
        </authorList>
    </citation>
    <scope>FUNCTION</scope>
    <scope>CATALYTIC ACTIVITY</scope>
    <scope>MUTAGENESIS OF ASP-561</scope>
</reference>
<reference key="17">
    <citation type="journal article" date="2011" name="J. Clin. Invest.">
        <title>IRBIT governs epithelial secretion in mice by antagonizing the WNK/SPAK kinase pathway.</title>
        <authorList>
            <person name="Yang D."/>
            <person name="Li Q."/>
            <person name="So I."/>
            <person name="Huang C.L."/>
            <person name="Ando H."/>
            <person name="Mizutani A."/>
            <person name="Seki G."/>
            <person name="Mikoshiba K."/>
            <person name="Thomas P.J."/>
            <person name="Muallem S."/>
        </authorList>
    </citation>
    <scope>FUNCTION</scope>
    <scope>TISSUE SPECIFICITY</scope>
    <scope>MUTAGENESIS OF ASP-318</scope>
</reference>
<reference key="18">
    <citation type="journal article" date="2013" name="Cell Rep.">
        <title>Impaired KLHL3-mediated ubiquitination of WNK4 causes human hypertension.</title>
        <authorList>
            <person name="Wakabayashi M."/>
            <person name="Mori T."/>
            <person name="Isobe K."/>
            <person name="Sohara E."/>
            <person name="Susa K."/>
            <person name="Araki Y."/>
            <person name="Chiga M."/>
            <person name="Kikuchi E."/>
            <person name="Nomura N."/>
            <person name="Mori Y."/>
            <person name="Matsuo H."/>
            <person name="Murata T."/>
            <person name="Nomura S."/>
            <person name="Asano T."/>
            <person name="Kawaguchi H."/>
            <person name="Nonoyama S."/>
            <person name="Rai T."/>
            <person name="Sasaki S."/>
            <person name="Uchida S."/>
        </authorList>
    </citation>
    <scope>MUTAGENESIS OF ASP-561</scope>
</reference>
<reference key="19">
    <citation type="journal article" date="2013" name="Proc. Natl. Acad. Sci. U.S.A.">
        <title>Kelch-like 3 and Cullin 3 regulate electrolyte homeostasis via ubiquitination and degradation of WNK4.</title>
        <authorList>
            <person name="Shibata S."/>
            <person name="Zhang J."/>
            <person name="Puthumana J."/>
            <person name="Stone K.L."/>
            <person name="Lifton R.P."/>
        </authorList>
    </citation>
    <scope>MUTAGENESIS OF GLN-562</scope>
</reference>
<reference key="20">
    <citation type="journal article" date="2021" name="Am. J. Physiol.">
        <title>WNKs are potassium-sensitive kinases.</title>
        <authorList>
            <person name="Pleinis J.M."/>
            <person name="Norrell L."/>
            <person name="Akella R."/>
            <person name="Humphreys J.M."/>
            <person name="He H."/>
            <person name="Sun Q."/>
            <person name="Zhang F."/>
            <person name="Sosa-Pagan J."/>
            <person name="Morrison D.E."/>
            <person name="Schellinger J.N."/>
            <person name="Jackson L.K."/>
            <person name="Goldsmith E.J."/>
            <person name="Rodan A.R."/>
        </authorList>
    </citation>
    <scope>ACTIVITY REGULATION</scope>
</reference>
<feature type="chain" id="PRO_0000086825" description="Serine/threonine-protein kinase WNK4">
    <location>
        <begin position="1"/>
        <end position="1222"/>
    </location>
</feature>
<feature type="domain" description="Protein kinase" evidence="5">
    <location>
        <begin position="171"/>
        <end position="429"/>
    </location>
</feature>
<feature type="region of interest" description="Disordered" evidence="6">
    <location>
        <begin position="1"/>
        <end position="165"/>
    </location>
</feature>
<feature type="region of interest" description="Disordered" evidence="6">
    <location>
        <begin position="525"/>
        <end position="562"/>
    </location>
</feature>
<feature type="region of interest" description="Interaction with KLHL3" evidence="2">
    <location>
        <begin position="554"/>
        <end position="564"/>
    </location>
</feature>
<feature type="region of interest" description="Disordered" evidence="6">
    <location>
        <begin position="626"/>
        <end position="659"/>
    </location>
</feature>
<feature type="region of interest" description="Disordered" evidence="6">
    <location>
        <begin position="747"/>
        <end position="809"/>
    </location>
</feature>
<feature type="region of interest" description="Disordered" evidence="6">
    <location>
        <begin position="877"/>
        <end position="896"/>
    </location>
</feature>
<feature type="region of interest" description="Disordered" evidence="6">
    <location>
        <begin position="927"/>
        <end position="976"/>
    </location>
</feature>
<feature type="region of interest" description="Disordered" evidence="6">
    <location>
        <begin position="1000"/>
        <end position="1087"/>
    </location>
</feature>
<feature type="region of interest" description="Disordered" evidence="6">
    <location>
        <begin position="1166"/>
        <end position="1222"/>
    </location>
</feature>
<feature type="short sequence motif" description="RFXV motif" evidence="2">
    <location>
        <begin position="996"/>
        <end position="999"/>
    </location>
</feature>
<feature type="compositionally biased region" description="Polar residues" evidence="6">
    <location>
        <begin position="1"/>
        <end position="17"/>
    </location>
</feature>
<feature type="compositionally biased region" description="Low complexity" evidence="6">
    <location>
        <begin position="90"/>
        <end position="101"/>
    </location>
</feature>
<feature type="compositionally biased region" description="Basic and acidic residues" evidence="6">
    <location>
        <begin position="135"/>
        <end position="152"/>
    </location>
</feature>
<feature type="compositionally biased region" description="Pro residues" evidence="6">
    <location>
        <begin position="533"/>
        <end position="553"/>
    </location>
</feature>
<feature type="compositionally biased region" description="Low complexity" evidence="6">
    <location>
        <begin position="627"/>
        <end position="638"/>
    </location>
</feature>
<feature type="compositionally biased region" description="Low complexity" evidence="6">
    <location>
        <begin position="757"/>
        <end position="769"/>
    </location>
</feature>
<feature type="compositionally biased region" description="Low complexity" evidence="6">
    <location>
        <begin position="793"/>
        <end position="807"/>
    </location>
</feature>
<feature type="compositionally biased region" description="Low complexity" evidence="6">
    <location>
        <begin position="877"/>
        <end position="890"/>
    </location>
</feature>
<feature type="compositionally biased region" description="Pro residues" evidence="6">
    <location>
        <begin position="935"/>
        <end position="944"/>
    </location>
</feature>
<feature type="compositionally biased region" description="Polar residues" evidence="6">
    <location>
        <begin position="953"/>
        <end position="963"/>
    </location>
</feature>
<feature type="compositionally biased region" description="Low complexity" evidence="6">
    <location>
        <begin position="1014"/>
        <end position="1032"/>
    </location>
</feature>
<feature type="compositionally biased region" description="Basic and acidic residues" evidence="6">
    <location>
        <begin position="1044"/>
        <end position="1056"/>
    </location>
</feature>
<feature type="compositionally biased region" description="Polar residues" evidence="6">
    <location>
        <begin position="1172"/>
        <end position="1183"/>
    </location>
</feature>
<feature type="compositionally biased region" description="Polar residues" evidence="6">
    <location>
        <begin position="1195"/>
        <end position="1207"/>
    </location>
</feature>
<feature type="active site" description="Proton acceptor" evidence="26">
    <location>
        <position position="318"/>
    </location>
</feature>
<feature type="binding site" evidence="3">
    <location>
        <position position="181"/>
    </location>
    <ligand>
        <name>ATP</name>
        <dbReference type="ChEBI" id="CHEBI:30616"/>
    </ligand>
</feature>
<feature type="binding site" evidence="3">
    <location>
        <begin position="251"/>
        <end position="254"/>
    </location>
    <ligand>
        <name>ATP</name>
        <dbReference type="ChEBI" id="CHEBI:30616"/>
    </ligand>
</feature>
<feature type="binding site" evidence="3">
    <location>
        <position position="301"/>
    </location>
    <ligand>
        <name>ATP</name>
        <dbReference type="ChEBI" id="CHEBI:30616"/>
    </ligand>
</feature>
<feature type="modified residue" description="Phosphoserine" evidence="2">
    <location>
        <position position="95"/>
    </location>
</feature>
<feature type="modified residue" description="Phosphoserine; by autocatalysis" evidence="4">
    <location>
        <position position="328"/>
    </location>
</feature>
<feature type="modified residue" description="Phosphoserine; by autocatalysis" evidence="4">
    <location>
        <position position="332"/>
    </location>
</feature>
<feature type="modified residue" description="Phosphoserine" evidence="2">
    <location>
        <position position="572"/>
    </location>
</feature>
<feature type="modified residue" description="Phosphoserine" evidence="1">
    <location>
        <position position="1014"/>
    </location>
</feature>
<feature type="modified residue" description="Phosphoserine" evidence="29">
    <location>
        <position position="1196"/>
    </location>
</feature>
<feature type="cross-link" description="Glycyl lysine isopeptide (Lys-Gly) (interchain with G-Cter in ubiquitin)" evidence="2">
    <location>
        <position position="154"/>
    </location>
</feature>
<feature type="cross-link" description="Glycyl lysine isopeptide (Lys-Gly) (interchain with G-Cter in ubiquitin)" evidence="2">
    <location>
        <position position="172"/>
    </location>
</feature>
<feature type="cross-link" description="Glycyl lysine isopeptide (Lys-Gly) (interchain with G-Cter in ubiquitin)" evidence="2">
    <location>
        <position position="183"/>
    </location>
</feature>
<feature type="cross-link" description="Glycyl lysine isopeptide (Lys-Gly) (interchain with G-Cter in ubiquitin)" evidence="2">
    <location>
        <position position="223"/>
    </location>
</feature>
<feature type="cross-link" description="Glycyl lysine isopeptide (Lys-Gly) (interchain with G-Cter in ubiquitin)" evidence="2">
    <location>
        <position position="238"/>
    </location>
</feature>
<feature type="cross-link" description="Glycyl lysine isopeptide (Lys-Gly) (interchain with G-Cter in ubiquitin)" evidence="2">
    <location>
        <position position="325"/>
    </location>
</feature>
<feature type="cross-link" description="Glycyl lysine isopeptide (Lys-Gly) (interchain with G-Cter in ubiquitin)" evidence="2">
    <location>
        <position position="384"/>
    </location>
</feature>
<feature type="cross-link" description="Glycyl lysine isopeptide (Lys-Gly) (interchain with G-Cter in ubiquitin)" evidence="2">
    <location>
        <position position="390"/>
    </location>
</feature>
<feature type="cross-link" description="Glycyl lysine isopeptide (Lys-Gly) (interchain with G-Cter in ubiquitin)" evidence="2">
    <location>
        <position position="447"/>
    </location>
</feature>
<feature type="cross-link" description="Glycyl lysine isopeptide (Lys-Gly) (interchain with G-Cter in ubiquitin)" evidence="2">
    <location>
        <position position="451"/>
    </location>
</feature>
<feature type="cross-link" description="Glycyl lysine isopeptide (Lys-Gly) (interchain with G-Cter in ubiquitin)" evidence="2">
    <location>
        <position position="990"/>
    </location>
</feature>
<feature type="cross-link" description="Glycyl lysine isopeptide (Lys-Gly) (interchain with G-Cter in ubiquitin)" evidence="2">
    <location>
        <position position="1123"/>
    </location>
</feature>
<feature type="cross-link" description="Glycyl lysine isopeptide (Lys-Gly) (interchain with G-Cter in ubiquitin)" evidence="2">
    <location>
        <position position="1136"/>
    </location>
</feature>
<feature type="cross-link" description="Glycyl lysine isopeptide (Lys-Gly) (interchain with G-Cter in ubiquitin)" evidence="2">
    <location>
        <position position="1137"/>
    </location>
</feature>
<feature type="mutagenesis site" description="Abolished serine/threonine-protein kinase activity without affecting ability to regulate localization of TRPV4 and SLC12A9." evidence="11 15">
    <original>K</original>
    <variation>M</variation>
    <location>
        <position position="183"/>
    </location>
</feature>
<feature type="mutagenesis site" description="Loss of serine/threonine-protein kinase activity. No effect on inhibition of KCNJ1, SCNN1A, SCNN1B or SCNN1D." evidence="10 13">
    <original>D</original>
    <variation>A</variation>
    <location>
        <position position="318"/>
    </location>
</feature>
<feature type="mutagenesis site" description="No effect on inhibition of SLC4A4." evidence="19">
    <original>D</original>
    <variation>E</variation>
    <location>
        <position position="318"/>
    </location>
</feature>
<feature type="mutagenesis site" description="No effect on inhibition of SLC12A3." evidence="9">
    <original>E</original>
    <variation>K</variation>
    <location>
        <position position="559"/>
    </location>
</feature>
<feature type="mutagenesis site" description="Increased protein level, probably due to defects in ubiquitination. Knockin mice display higher blood pressure, hyperkalemia, hypercalciuria and marked hyperplasia of the distal convoluted tubule cells of kidney. Increased phosphorylation of OXSR1/OSR1 and STK39/SPAK is observed, leading to phosphorylation and activation of SLC12A3/NCC." evidence="9 14 20 21">
    <original>D</original>
    <variation>A</variation>
    <location>
        <position position="561"/>
    </location>
</feature>
<feature type="mutagenesis site" description="Increased protein level, probably due to defects in ubiquitination. Knockin mice display higher blood pressure, hyperkalemia, hypercalciuria and marked hyperplasia of the distal convoluted tubule cells of kidney." evidence="9 12 13 22">
    <original>Q</original>
    <variation>E</variation>
    <location>
        <position position="562"/>
    </location>
</feature>
<feature type="sequence conflict" description="In Ref. 2; AAO25619." evidence="25" ref="2">
    <original>R</original>
    <variation>K</variation>
    <location>
        <position position="179"/>
    </location>
</feature>
<feature type="sequence conflict" description="In Ref. 4; AAH26679." evidence="25" ref="4">
    <original>S</original>
    <variation>F</variation>
    <location>
        <position position="607"/>
    </location>
</feature>
<organism evidence="27">
    <name type="scientific">Mus musculus</name>
    <name type="common">Mouse</name>
    <dbReference type="NCBI Taxonomy" id="10090"/>
    <lineage>
        <taxon>Eukaryota</taxon>
        <taxon>Metazoa</taxon>
        <taxon>Chordata</taxon>
        <taxon>Craniata</taxon>
        <taxon>Vertebrata</taxon>
        <taxon>Euteleostomi</taxon>
        <taxon>Mammalia</taxon>
        <taxon>Eutheria</taxon>
        <taxon>Euarchontoglires</taxon>
        <taxon>Glires</taxon>
        <taxon>Rodentia</taxon>
        <taxon>Myomorpha</taxon>
        <taxon>Muroidea</taxon>
        <taxon>Muridae</taxon>
        <taxon>Murinae</taxon>
        <taxon>Mus</taxon>
        <taxon>Mus</taxon>
    </lineage>
</organism>
<sequence>MLAPRNTETGVPMSQTEADLALRPSPALTSTGPTRLGPPPRRVRRFSGKAEPRPRSSRPSRRSSVDLGLLSSWSQPASLLPEPPDPPDSAGPTRSPPSSSKEPPEGTWMGAAPVKAVDSACPELTGSSGGPGSREPPRVPDAAARERRREQEEKEDTETQAVATSPDGRYLKFDIEIGRGSFKTVYRGLDTDTTVEVAWCELQTRKLSRAERQRFSEEVEMLKGLQHPNIVRFYDSWKSVLRGQVCIVLVTELMTSGTLKTYLRRFREMKPRVLQRWSRQILRGLHFLHSRVPPILHRDLKCDNVFITGPSGSVKIGDLGLATLKRASFAKSVIGTPEFMAPEMYEEKYDEAVDVYAFGMCMLEMATSEYPYSECQNAAQIYRKVTSGTKPNSFYKVKMPEVKEIIEGCIRTDKNERFTIQDLLAHAFFREERGVHVELAEEDDGEKPGLKLWLRMEDARRGGRPRDNQAIEFLFQLGRDAAEEVAQEMVALGLVCEADYQPVARAVRERVAAIQRKREKLRKARELEVLPPDSGPPPATVSLAPGPPSAFPPEPEEPEADQHQSFLFRHASYSSTTSDCETDGYLSSSGFLDASDPALQPPGGLPSSPAESHLCLPSGFALSIPRSGPGSDFSPGDSYASDAASGLSDMGEGGQMRKNPVKTLRRRPRSRLRVTSVSDQSDRVVECQLQTHNSKMVTFRFDLDGDSPEEIAAAMVYNEFILPSERDGFLSRIREIIQRVETLLKRDAGPPEAAEDALSPQEEPAALPALPGPPNAEPQRSISPEQRSWAAFSTSPSSPGTPLSPGAPFSPGTPPVFPCPIFPITSPSCYPCPFSQVSSNPYPQAPSSLLPLSSSASQVPLPSSSLPISAPLPFSPSYPQDPLSPTSLPVCPSPPSLPSTTAAPLLSLASAFSLAVMTVAQSLLSPSPGLLSQSPPAPPGPLPSLPLSLASCDQESLSAQTAETENEASRNPAQPLLGDARLAPISEEGKPQLVGRFQVTSSKEPAEPPLQPASPTLSRSLKLPSPPLTSESSDTEDSAAGGPETREALAESDRAAEGLGVAVDDEKDEGKEPLLGGSSPILSHPSPVWMNYSYSSLCLSSEESESSGEDEEFWAELQNLRQKHLSEVEALQTLQKKEIEDLYSRLGKQPPPGIVAPAAMLSCRQRRLSKGSFPTSRRNSLQRSDLPGPGIMRRNSLSGSSTGSQEQRASKGVTFAGDIGRM</sequence>
<protein>
    <recommendedName>
        <fullName evidence="25">Serine/threonine-protein kinase WNK4</fullName>
        <ecNumber evidence="20">2.7.11.1</ecNumber>
    </recommendedName>
    <alternativeName>
        <fullName evidence="28">Protein kinase lysine-deficient 4</fullName>
    </alternativeName>
    <alternativeName>
        <fullName evidence="24">Protein kinase with no lysine 4</fullName>
    </alternativeName>
</protein>
<dbReference type="EC" id="2.7.11.1" evidence="20"/>
<dbReference type="EMBL" id="AY187027">
    <property type="protein sequence ID" value="AAO21955.1"/>
    <property type="molecule type" value="mRNA"/>
</dbReference>
<dbReference type="EMBL" id="AY184228">
    <property type="protein sequence ID" value="AAO25619.1"/>
    <property type="status" value="ALT_INIT"/>
    <property type="molecule type" value="mRNA"/>
</dbReference>
<dbReference type="EMBL" id="AL590969">
    <property type="status" value="NOT_ANNOTATED_CDS"/>
    <property type="molecule type" value="Genomic_DNA"/>
</dbReference>
<dbReference type="EMBL" id="BC026591">
    <property type="protein sequence ID" value="AAH26591.1"/>
    <property type="molecule type" value="mRNA"/>
</dbReference>
<dbReference type="EMBL" id="BC026679">
    <property type="protein sequence ID" value="AAH26679.1"/>
    <property type="status" value="ALT_INIT"/>
    <property type="molecule type" value="mRNA"/>
</dbReference>
<dbReference type="EMBL" id="BC043677">
    <property type="protein sequence ID" value="AAH43677.1"/>
    <property type="status" value="ALT_INIT"/>
    <property type="molecule type" value="mRNA"/>
</dbReference>
<dbReference type="EMBL" id="BC096453">
    <property type="protein sequence ID" value="AAH96453.1"/>
    <property type="molecule type" value="mRNA"/>
</dbReference>
<dbReference type="CCDS" id="CCDS25459.1"/>
<dbReference type="RefSeq" id="NP_783569.1">
    <property type="nucleotide sequence ID" value="NM_175638.3"/>
</dbReference>
<dbReference type="SMR" id="Q80UE6"/>
<dbReference type="BioGRID" id="213713">
    <property type="interactions" value="6"/>
</dbReference>
<dbReference type="DIP" id="DIP-33231N"/>
<dbReference type="ELM" id="Q80UE6"/>
<dbReference type="FunCoup" id="Q80UE6">
    <property type="interactions" value="97"/>
</dbReference>
<dbReference type="IntAct" id="Q80UE6">
    <property type="interactions" value="6"/>
</dbReference>
<dbReference type="MINT" id="Q80UE6"/>
<dbReference type="STRING" id="10090.ENSMUSP00000099397"/>
<dbReference type="GlyGen" id="Q80UE6">
    <property type="glycosylation" value="8 sites, 1 O-linked glycan (7 sites)"/>
</dbReference>
<dbReference type="iPTMnet" id="Q80UE6"/>
<dbReference type="PhosphoSitePlus" id="Q80UE6"/>
<dbReference type="jPOST" id="Q80UE6"/>
<dbReference type="PaxDb" id="10090-ENSMUSP00000099397"/>
<dbReference type="ProteomicsDB" id="299696"/>
<dbReference type="Pumba" id="Q80UE6"/>
<dbReference type="Antibodypedia" id="29411">
    <property type="antibodies" value="235 antibodies from 25 providers"/>
</dbReference>
<dbReference type="DNASU" id="69847"/>
<dbReference type="Ensembl" id="ENSMUST00000103108.8">
    <property type="protein sequence ID" value="ENSMUSP00000099397.2"/>
    <property type="gene ID" value="ENSMUSG00000035112.18"/>
</dbReference>
<dbReference type="GeneID" id="69847"/>
<dbReference type="KEGG" id="mmu:69847"/>
<dbReference type="UCSC" id="uc007loe.2">
    <property type="organism name" value="mouse"/>
</dbReference>
<dbReference type="AGR" id="MGI:1917097"/>
<dbReference type="CTD" id="65266"/>
<dbReference type="MGI" id="MGI:1917097">
    <property type="gene designation" value="Wnk4"/>
</dbReference>
<dbReference type="VEuPathDB" id="HostDB:ENSMUSG00000035112"/>
<dbReference type="eggNOG" id="KOG0584">
    <property type="taxonomic scope" value="Eukaryota"/>
</dbReference>
<dbReference type="GeneTree" id="ENSGT00940000159871"/>
<dbReference type="HOGENOM" id="CLU_000550_2_1_1"/>
<dbReference type="InParanoid" id="Q80UE6"/>
<dbReference type="OMA" id="QHHPFNF"/>
<dbReference type="OrthoDB" id="4062651at2759"/>
<dbReference type="PhylomeDB" id="Q80UE6"/>
<dbReference type="TreeFam" id="TF315363"/>
<dbReference type="BioGRID-ORCS" id="69847">
    <property type="hits" value="3 hits in 79 CRISPR screens"/>
</dbReference>
<dbReference type="CD-CODE" id="62836ADF">
    <property type="entry name" value="WNK body"/>
</dbReference>
<dbReference type="ChiTaRS" id="Wnk4">
    <property type="organism name" value="mouse"/>
</dbReference>
<dbReference type="PRO" id="PR:Q80UE6"/>
<dbReference type="Proteomes" id="UP000000589">
    <property type="component" value="Chromosome 11"/>
</dbReference>
<dbReference type="RNAct" id="Q80UE6">
    <property type="molecule type" value="protein"/>
</dbReference>
<dbReference type="Bgee" id="ENSMUSG00000035112">
    <property type="expression patterns" value="Expressed in humerus cartilage element and 191 other cell types or tissues"/>
</dbReference>
<dbReference type="ExpressionAtlas" id="Q80UE6">
    <property type="expression patterns" value="baseline and differential"/>
</dbReference>
<dbReference type="GO" id="GO:0005923">
    <property type="term" value="C:bicellular tight junction"/>
    <property type="evidence" value="ECO:0000314"/>
    <property type="project" value="UniProtKB"/>
</dbReference>
<dbReference type="GO" id="GO:0044297">
    <property type="term" value="C:cell body"/>
    <property type="evidence" value="ECO:0000315"/>
    <property type="project" value="MGI"/>
</dbReference>
<dbReference type="GO" id="GO:0005737">
    <property type="term" value="C:cytoplasm"/>
    <property type="evidence" value="ECO:0000314"/>
    <property type="project" value="MGI"/>
</dbReference>
<dbReference type="GO" id="GO:0005829">
    <property type="term" value="C:cytosol"/>
    <property type="evidence" value="ECO:0007669"/>
    <property type="project" value="Ensembl"/>
</dbReference>
<dbReference type="GO" id="GO:0016020">
    <property type="term" value="C:membrane"/>
    <property type="evidence" value="ECO:0007669"/>
    <property type="project" value="Ensembl"/>
</dbReference>
<dbReference type="GO" id="GO:0032991">
    <property type="term" value="C:protein-containing complex"/>
    <property type="evidence" value="ECO:0000314"/>
    <property type="project" value="MGI"/>
</dbReference>
<dbReference type="GO" id="GO:0005524">
    <property type="term" value="F:ATP binding"/>
    <property type="evidence" value="ECO:0000250"/>
    <property type="project" value="UniProtKB"/>
</dbReference>
<dbReference type="GO" id="GO:0031404">
    <property type="term" value="F:chloride ion binding"/>
    <property type="evidence" value="ECO:0000315"/>
    <property type="project" value="MGI"/>
</dbReference>
<dbReference type="GO" id="GO:0008200">
    <property type="term" value="F:ion channel inhibitor activity"/>
    <property type="evidence" value="ECO:0000314"/>
    <property type="project" value="UniProtKB"/>
</dbReference>
<dbReference type="GO" id="GO:0106310">
    <property type="term" value="F:protein serine kinase activity"/>
    <property type="evidence" value="ECO:0007669"/>
    <property type="project" value="RHEA"/>
</dbReference>
<dbReference type="GO" id="GO:0004674">
    <property type="term" value="F:protein serine/threonine kinase activity"/>
    <property type="evidence" value="ECO:0000315"/>
    <property type="project" value="UniProtKB"/>
</dbReference>
<dbReference type="GO" id="GO:0035932">
    <property type="term" value="P:aldosterone secretion"/>
    <property type="evidence" value="ECO:0000315"/>
    <property type="project" value="MGI"/>
</dbReference>
<dbReference type="GO" id="GO:0055074">
    <property type="term" value="P:calcium ion homeostasis"/>
    <property type="evidence" value="ECO:0000315"/>
    <property type="project" value="MGI"/>
</dbReference>
<dbReference type="GO" id="GO:0071466">
    <property type="term" value="P:cellular response to xenobiotic stimulus"/>
    <property type="evidence" value="ECO:0000315"/>
    <property type="project" value="MGI"/>
</dbReference>
<dbReference type="GO" id="GO:0006821">
    <property type="term" value="P:chloride transport"/>
    <property type="evidence" value="ECO:0000314"/>
    <property type="project" value="MGI"/>
</dbReference>
<dbReference type="GO" id="GO:0072156">
    <property type="term" value="P:distal tubule morphogenesis"/>
    <property type="evidence" value="ECO:0000250"/>
    <property type="project" value="UniProtKB"/>
</dbReference>
<dbReference type="GO" id="GO:0070371">
    <property type="term" value="P:ERK1 and ERK2 cascade"/>
    <property type="evidence" value="ECO:0000315"/>
    <property type="project" value="MGI"/>
</dbReference>
<dbReference type="GO" id="GO:0010467">
    <property type="term" value="P:gene expression"/>
    <property type="evidence" value="ECO:0000315"/>
    <property type="project" value="MGI"/>
</dbReference>
<dbReference type="GO" id="GO:0006954">
    <property type="term" value="P:inflammatory response"/>
    <property type="evidence" value="ECO:0000315"/>
    <property type="project" value="MGI"/>
</dbReference>
<dbReference type="GO" id="GO:0030644">
    <property type="term" value="P:intracellular chloride ion homeostasis"/>
    <property type="evidence" value="ECO:0000315"/>
    <property type="project" value="MGI"/>
</dbReference>
<dbReference type="GO" id="GO:0035556">
    <property type="term" value="P:intracellular signal transduction"/>
    <property type="evidence" value="ECO:0000250"/>
    <property type="project" value="UniProtKB"/>
</dbReference>
<dbReference type="GO" id="GO:0042116">
    <property type="term" value="P:macrophage activation"/>
    <property type="evidence" value="ECO:0000315"/>
    <property type="project" value="MGI"/>
</dbReference>
<dbReference type="GO" id="GO:0050801">
    <property type="term" value="P:monoatomic ion homeostasis"/>
    <property type="evidence" value="ECO:0000315"/>
    <property type="project" value="MGI"/>
</dbReference>
<dbReference type="GO" id="GO:0090188">
    <property type="term" value="P:negative regulation of pancreatic juice secretion"/>
    <property type="evidence" value="ECO:0000315"/>
    <property type="project" value="MGI"/>
</dbReference>
<dbReference type="GO" id="GO:1903077">
    <property type="term" value="P:negative regulation of protein localization to plasma membrane"/>
    <property type="evidence" value="ECO:0000314"/>
    <property type="project" value="UniProtKB"/>
</dbReference>
<dbReference type="GO" id="GO:0010766">
    <property type="term" value="P:negative regulation of sodium ion transport"/>
    <property type="evidence" value="ECO:0000250"/>
    <property type="project" value="UniProtKB"/>
</dbReference>
<dbReference type="GO" id="GO:0071805">
    <property type="term" value="P:potassium ion transmembrane transport"/>
    <property type="evidence" value="ECO:0000315"/>
    <property type="project" value="MGI"/>
</dbReference>
<dbReference type="GO" id="GO:0008104">
    <property type="term" value="P:protein localization"/>
    <property type="evidence" value="ECO:0000314"/>
    <property type="project" value="MGI"/>
</dbReference>
<dbReference type="GO" id="GO:0006468">
    <property type="term" value="P:protein phosphorylation"/>
    <property type="evidence" value="ECO:0000250"/>
    <property type="project" value="UniProtKB"/>
</dbReference>
<dbReference type="GO" id="GO:0008217">
    <property type="term" value="P:regulation of blood pressure"/>
    <property type="evidence" value="ECO:0000315"/>
    <property type="project" value="UniProtKB"/>
</dbReference>
<dbReference type="GO" id="GO:1903764">
    <property type="term" value="P:regulation of potassium ion export across plasma membrane"/>
    <property type="evidence" value="ECO:0000315"/>
    <property type="project" value="UniProtKB"/>
</dbReference>
<dbReference type="GO" id="GO:0070294">
    <property type="term" value="P:renal sodium ion absorption"/>
    <property type="evidence" value="ECO:0000315"/>
    <property type="project" value="UniProtKB"/>
</dbReference>
<dbReference type="GO" id="GO:0003096">
    <property type="term" value="P:renal sodium ion transport"/>
    <property type="evidence" value="ECO:0000314"/>
    <property type="project" value="UniProtKB"/>
</dbReference>
<dbReference type="GO" id="GO:0002021">
    <property type="term" value="P:response to dietary excess"/>
    <property type="evidence" value="ECO:0000315"/>
    <property type="project" value="MGI"/>
</dbReference>
<dbReference type="GO" id="GO:0009410">
    <property type="term" value="P:response to xenobiotic stimulus"/>
    <property type="evidence" value="ECO:0000316"/>
    <property type="project" value="MGI"/>
</dbReference>
<dbReference type="GO" id="GO:0007165">
    <property type="term" value="P:signal transduction"/>
    <property type="evidence" value="ECO:0000315"/>
    <property type="project" value="MGI"/>
</dbReference>
<dbReference type="GO" id="GO:0035725">
    <property type="term" value="P:sodium ion transmembrane transport"/>
    <property type="evidence" value="ECO:0000315"/>
    <property type="project" value="MGI"/>
</dbReference>
<dbReference type="CDD" id="cd14033">
    <property type="entry name" value="STKc_WNK4"/>
    <property type="match status" value="1"/>
</dbReference>
<dbReference type="FunFam" id="3.10.20.90:FF:000007">
    <property type="entry name" value="Serine/threonine-protein kinase WNK1 isoform 1"/>
    <property type="match status" value="1"/>
</dbReference>
<dbReference type="FunFam" id="1.10.510.10:FF:000006">
    <property type="entry name" value="Serine/threonine-protein kinase WNK1 isoform 2"/>
    <property type="match status" value="1"/>
</dbReference>
<dbReference type="FunFam" id="3.30.200.20:FF:000010">
    <property type="entry name" value="Serine/threonine-protein kinase WNK1 isoform 2"/>
    <property type="match status" value="1"/>
</dbReference>
<dbReference type="FunFam" id="3.10.20.90:FF:000127">
    <property type="entry name" value="serine/threonine-protein kinase WNK4 isoform X1"/>
    <property type="match status" value="1"/>
</dbReference>
<dbReference type="Gene3D" id="3.10.20.90">
    <property type="entry name" value="Phosphatidylinositol 3-kinase Catalytic Subunit, Chain A, domain 1"/>
    <property type="match status" value="2"/>
</dbReference>
<dbReference type="Gene3D" id="3.30.200.20">
    <property type="entry name" value="Phosphorylase Kinase, domain 1"/>
    <property type="match status" value="1"/>
</dbReference>
<dbReference type="Gene3D" id="1.10.510.10">
    <property type="entry name" value="Transferase(Phosphotransferase) domain 1"/>
    <property type="match status" value="1"/>
</dbReference>
<dbReference type="InterPro" id="IPR056865">
    <property type="entry name" value="CCTL2_WNK"/>
</dbReference>
<dbReference type="InterPro" id="IPR011009">
    <property type="entry name" value="Kinase-like_dom_sf"/>
</dbReference>
<dbReference type="InterPro" id="IPR024678">
    <property type="entry name" value="Kinase_OSR1/WNK_CCT"/>
</dbReference>
<dbReference type="InterPro" id="IPR000719">
    <property type="entry name" value="Prot_kinase_dom"/>
</dbReference>
<dbReference type="InterPro" id="IPR008271">
    <property type="entry name" value="Ser/Thr_kinase_AS"/>
</dbReference>
<dbReference type="InterPro" id="IPR050588">
    <property type="entry name" value="WNK_Ser-Thr_kinase"/>
</dbReference>
<dbReference type="PANTHER" id="PTHR13902">
    <property type="entry name" value="SERINE/THREONINE-PROTEIN KINASE WNK WITH NO LYSINE -RELATED"/>
    <property type="match status" value="1"/>
</dbReference>
<dbReference type="Pfam" id="PF24889">
    <property type="entry name" value="CCTL2_WNK"/>
    <property type="match status" value="1"/>
</dbReference>
<dbReference type="Pfam" id="PF12202">
    <property type="entry name" value="OSR1_C"/>
    <property type="match status" value="1"/>
</dbReference>
<dbReference type="Pfam" id="PF00069">
    <property type="entry name" value="Pkinase"/>
    <property type="match status" value="1"/>
</dbReference>
<dbReference type="SMART" id="SM00220">
    <property type="entry name" value="S_TKc"/>
    <property type="match status" value="1"/>
</dbReference>
<dbReference type="SUPFAM" id="SSF56112">
    <property type="entry name" value="Protein kinase-like (PK-like)"/>
    <property type="match status" value="1"/>
</dbReference>
<dbReference type="PROSITE" id="PS50011">
    <property type="entry name" value="PROTEIN_KINASE_DOM"/>
    <property type="match status" value="1"/>
</dbReference>
<dbReference type="PROSITE" id="PS00108">
    <property type="entry name" value="PROTEIN_KINASE_ST"/>
    <property type="match status" value="1"/>
</dbReference>
<comment type="function">
    <text evidence="2 8 10 11 12 13 14 15 16 17 18 19 20">Serine/threonine-protein kinase component of the WNK4-SPAK/OSR1 kinase cascade, which acts as a key regulator of ion transport in the distal nephron and blood pressure (PubMed:12515852, PubMed:14608358, PubMed:16964266, PubMed:17360470, PubMed:17488636, PubMed:17975670, PubMed:19240212, PubMed:19633012, PubMed:21486947). The WNK4-SPAK/OSR1 kinase cascade is composed of WNK4, which mediates phosphorylation and activation of downstream kinases OXSR1/OSR1 and STK39/SPAK (PubMed:21486947). Following activation, OXSR1/OSR1 and STK39/SPAK catalyze phosphorylation of ion cotransporters, such as SLC12A1/NKCC2, SLC12A2/NKCC1, SLC12A3/NCC, SLC12A5/KCC2 or SLC12A6/KCC3, regulating their activity (PubMed:17488636, PubMed:19633012, PubMed:21486947). Acts as a molecular switch that regulates the balance between renal salt reabsorption and K(+) secretion by modulating the activities of renal transporters and channels, including the Na-Cl cotransporter SLC12A3/NCC and the K(+) channel, KCNJ1/ROMK (PubMed:14608358, PubMed:16964266, PubMed:17975670). Regulates NaCl reabsorption in the distal nephron by activating the thiazide-sensitive Na-Cl cotransporter SLC12A3/NCC in distal convoluted tubule cells of kidney: activates SLC12A3/NCC in a OXSR1/OSR1- and STK39/SPAK-dependent process (PubMed:14608358, PubMed:17488636, PubMed:17975670, PubMed:19633012, PubMed:21486947). Also acts as a scaffold protein independently of its protein kinase activity: negatively regulates cell membrane localization of various transporters and channels (CFTR, KCNJ1/ROMK, SLC4A4, SLC26A9 and TRPV4) by clathrin-dependent endocytosis (PubMed:14608358, PubMed:16403833, PubMed:17673510, PubMed:21317537). Also inhibits the activity of the epithelial Na(+) channel (ENaC) SCNN1A, SCNN1B, SCNN1D in a inase-independent mechanism (PubMed:17360470). May also phosphorylate NEDD4L (By similarity).</text>
</comment>
<comment type="catalytic activity">
    <reaction evidence="3">
        <text>L-seryl-[protein] + ATP = O-phospho-L-seryl-[protein] + ADP + H(+)</text>
        <dbReference type="Rhea" id="RHEA:17989"/>
        <dbReference type="Rhea" id="RHEA-COMP:9863"/>
        <dbReference type="Rhea" id="RHEA-COMP:11604"/>
        <dbReference type="ChEBI" id="CHEBI:15378"/>
        <dbReference type="ChEBI" id="CHEBI:29999"/>
        <dbReference type="ChEBI" id="CHEBI:30616"/>
        <dbReference type="ChEBI" id="CHEBI:83421"/>
        <dbReference type="ChEBI" id="CHEBI:456216"/>
        <dbReference type="EC" id="2.7.11.1"/>
    </reaction>
</comment>
<comment type="catalytic activity">
    <reaction evidence="20">
        <text>L-threonyl-[protein] + ATP = O-phospho-L-threonyl-[protein] + ADP + H(+)</text>
        <dbReference type="Rhea" id="RHEA:46608"/>
        <dbReference type="Rhea" id="RHEA-COMP:11060"/>
        <dbReference type="Rhea" id="RHEA-COMP:11605"/>
        <dbReference type="ChEBI" id="CHEBI:15378"/>
        <dbReference type="ChEBI" id="CHEBI:30013"/>
        <dbReference type="ChEBI" id="CHEBI:30616"/>
        <dbReference type="ChEBI" id="CHEBI:61977"/>
        <dbReference type="ChEBI" id="CHEBI:456216"/>
        <dbReference type="EC" id="2.7.11.1"/>
    </reaction>
</comment>
<comment type="cofactor">
    <cofactor evidence="3">
        <name>Mg(2+)</name>
        <dbReference type="ChEBI" id="CHEBI:18420"/>
    </cofactor>
</comment>
<comment type="activity regulation">
    <text evidence="4 23">Activation requires autophosphorylation of Ser-328 and Ser-332 (By similarity). Autophosphorylation and subsequent activation is inhibited by increases in intracellular ionic strength: Cl(-) potently inhibits WNK4 kinase activity via direct binding (By similarity). Also inhibited by K(+) ions (PubMed:33439774).</text>
</comment>
<comment type="subunit">
    <text evidence="2 10 16">Interacts with the C-terminal region of KCNJ1 (PubMed:14608358). Interacts with WNK1 and WNK3 (PubMed:17975670). Interacts with KLHL3 (By similarity).</text>
</comment>
<comment type="interaction">
    <interactant intactId="EBI-295378">
        <id>Q80UE6</id>
    </interactant>
    <interactant intactId="EBI-538447">
        <id>P69744</id>
        <label>Trpv5</label>
    </interactant>
    <organismsDiffer>false</organismsDiffer>
    <experiments>2</experiments>
</comment>
<comment type="interaction">
    <interactant intactId="EBI-295378">
        <id>Q80UE6</id>
    </interactant>
    <interactant intactId="EBI-1042854">
        <id>O00141</id>
        <label>SGK1</label>
    </interactant>
    <organismsDiffer>true</organismsDiffer>
    <experiments>2</experiments>
</comment>
<comment type="interaction">
    <interactant intactId="EBI-295378">
        <id>Q80UE6</id>
    </interactant>
    <interactant intactId="EBI-15563545">
        <id>Q13507-3</id>
        <label>TRPC3</label>
    </interactant>
    <organismsDiffer>true</organismsDiffer>
    <experiments>2</experiments>
</comment>
<comment type="subcellular location">
    <subcellularLocation>
        <location evidence="7">Cell junction</location>
        <location evidence="7">Tight junction</location>
    </subcellularLocation>
    <text evidence="7">Present exclusively in intercellular junctions in the distal convoluted tubule and in both the cytoplasm and intercellular junctions in the cortical collecting duct (PubMed:11498583). WNK4 is part of the tight junction complex (PubMed:11498583).</text>
</comment>
<comment type="tissue specificity">
    <text evidence="7 19">Locates to the distal convoluted tubule, the medullary collecting duct and the cortical collecting duct of the kidney (PubMed:11498583). Expressed in pancreatic duct (PubMed:21317537).</text>
</comment>
<comment type="domain">
    <text evidence="2">The RFXV motif mediates recognition with downstream kinases OXSR1/OSR1 and STK39/SPAK.</text>
</comment>
<comment type="PTM">
    <text evidence="4 16">Autophosphorylated at Ser-328 and Ser-332, promoting its activation (By similarity). Phosphorylated by WNK1 and WNK3 (PubMed:17975670). Phosphorylated at Ser-572 in a MAP3K15/ASK3-dependent process in response to osmotic stress or hypotonic low-chloride stimulation (By similarity).</text>
</comment>
<comment type="PTM">
    <text evidence="2">Ubiquitinated by the BCR(KLHL3) complex, leading to its degradation. Also ubiquitinated by the BCR(KLHL2) complex.</text>
</comment>
<comment type="disruption phenotype">
    <text evidence="18">Embryonic lethality (PubMed:19633012). Hypomorphic mice do not display hypokalemia and metabolic alkalosis, but show low blood pressure and increased Na(+) and K(+) excretion under low-salt diet (PubMed:19633012). Phosphorylation of OXSR1/OSR1, STK39/SPAK and SLC12A3/NCC is significantly reduced in the hypomorphic mice (PubMed:19633012).</text>
</comment>
<comment type="similarity">
    <text evidence="5">Belongs to the protein kinase superfamily. Ser/Thr protein kinase family. WNK subfamily.</text>
</comment>
<comment type="caution">
    <text evidence="3">Was named WNK/'with no lysine(K)' because key residues for catalysis, including the lysine involved in ATP binding, are either not conserved or differ compared to the residues described in other kinase family proteins.</text>
</comment>
<comment type="sequence caution" evidence="25">
    <conflict type="erroneous initiation">
        <sequence resource="EMBL-CDS" id="AAH26679"/>
    </conflict>
    <text>Extended N-terminus.</text>
</comment>
<comment type="sequence caution" evidence="25">
    <conflict type="erroneous initiation">
        <sequence resource="EMBL-CDS" id="AAH43677"/>
    </conflict>
    <text>Extended N-terminus.</text>
</comment>
<comment type="sequence caution" evidence="25">
    <conflict type="erroneous initiation">
        <sequence resource="EMBL-CDS" id="AAO25619"/>
    </conflict>
    <text>Truncated N-terminus.</text>
</comment>
<keyword id="KW-0067">ATP-binding</keyword>
<keyword id="KW-0965">Cell junction</keyword>
<keyword id="KW-1017">Isopeptide bond</keyword>
<keyword id="KW-0418">Kinase</keyword>
<keyword id="KW-0547">Nucleotide-binding</keyword>
<keyword id="KW-0597">Phosphoprotein</keyword>
<keyword id="KW-1185">Reference proteome</keyword>
<keyword id="KW-0723">Serine/threonine-protein kinase</keyword>
<keyword id="KW-0796">Tight junction</keyword>
<keyword id="KW-0808">Transferase</keyword>
<keyword id="KW-0832">Ubl conjugation</keyword>
<evidence type="ECO:0000250" key="1">
    <source>
        <dbReference type="UniProtKB" id="Q7TPK6"/>
    </source>
</evidence>
<evidence type="ECO:0000250" key="2">
    <source>
        <dbReference type="UniProtKB" id="Q96J92"/>
    </source>
</evidence>
<evidence type="ECO:0000250" key="3">
    <source>
        <dbReference type="UniProtKB" id="Q9H4A3"/>
    </source>
</evidence>
<evidence type="ECO:0000250" key="4">
    <source>
        <dbReference type="UniProtKB" id="Q9JIH7"/>
    </source>
</evidence>
<evidence type="ECO:0000255" key="5">
    <source>
        <dbReference type="PROSITE-ProRule" id="PRU00159"/>
    </source>
</evidence>
<evidence type="ECO:0000256" key="6">
    <source>
        <dbReference type="SAM" id="MobiDB-lite"/>
    </source>
</evidence>
<evidence type="ECO:0000269" key="7">
    <source>
    </source>
</evidence>
<evidence type="ECO:0000269" key="8">
    <source>
    </source>
</evidence>
<evidence type="ECO:0000269" key="9">
    <source>
    </source>
</evidence>
<evidence type="ECO:0000269" key="10">
    <source>
    </source>
</evidence>
<evidence type="ECO:0000269" key="11">
    <source>
    </source>
</evidence>
<evidence type="ECO:0000269" key="12">
    <source>
    </source>
</evidence>
<evidence type="ECO:0000269" key="13">
    <source>
    </source>
</evidence>
<evidence type="ECO:0000269" key="14">
    <source>
    </source>
</evidence>
<evidence type="ECO:0000269" key="15">
    <source>
    </source>
</evidence>
<evidence type="ECO:0000269" key="16">
    <source>
    </source>
</evidence>
<evidence type="ECO:0000269" key="17">
    <source>
    </source>
</evidence>
<evidence type="ECO:0000269" key="18">
    <source>
    </source>
</evidence>
<evidence type="ECO:0000269" key="19">
    <source>
    </source>
</evidence>
<evidence type="ECO:0000269" key="20">
    <source>
    </source>
</evidence>
<evidence type="ECO:0000269" key="21">
    <source>
    </source>
</evidence>
<evidence type="ECO:0000269" key="22">
    <source>
    </source>
</evidence>
<evidence type="ECO:0000269" key="23">
    <source>
    </source>
</evidence>
<evidence type="ECO:0000303" key="24">
    <source>
    </source>
</evidence>
<evidence type="ECO:0000305" key="25"/>
<evidence type="ECO:0000305" key="26">
    <source>
    </source>
</evidence>
<evidence type="ECO:0000312" key="27">
    <source>
        <dbReference type="EMBL" id="AAO21955.1"/>
    </source>
</evidence>
<evidence type="ECO:0000312" key="28">
    <source>
        <dbReference type="MGI" id="MGI:1917097"/>
    </source>
</evidence>
<evidence type="ECO:0007744" key="29">
    <source>
    </source>
</evidence>
<gene>
    <name evidence="24 28" type="primary">Wnk4</name>
    <name evidence="28" type="synonym">Prkwnk4</name>
</gene>
<proteinExistence type="evidence at protein level"/>
<name>WNK4_MOUSE</name>
<accession>Q80UE6</accession>
<accession>A2A4J7</accession>
<accession>Q4VAC1</accession>
<accession>Q80XB5</accession>
<accession>Q80XN2</accession>
<accession>Q8R0N0</accession>
<accession>Q8R340</accession>